<keyword id="KW-0687">Ribonucleoprotein</keyword>
<keyword id="KW-0689">Ribosomal protein</keyword>
<keyword id="KW-0694">RNA-binding</keyword>
<keyword id="KW-0699">rRNA-binding</keyword>
<reference key="1">
    <citation type="journal article" date="2006" name="Science">
        <title>Genomic islands and the ecology and evolution of Prochlorococcus.</title>
        <authorList>
            <person name="Coleman M.L."/>
            <person name="Sullivan M.B."/>
            <person name="Martiny A.C."/>
            <person name="Steglich C."/>
            <person name="Barry K."/>
            <person name="Delong E.F."/>
            <person name="Chisholm S.W."/>
        </authorList>
    </citation>
    <scope>NUCLEOTIDE SEQUENCE [LARGE SCALE GENOMIC DNA]</scope>
    <source>
        <strain>MIT 9312</strain>
    </source>
</reference>
<protein>
    <recommendedName>
        <fullName evidence="1">Small ribosomal subunit protein bS20</fullName>
    </recommendedName>
    <alternativeName>
        <fullName evidence="2">30S ribosomal protein S20</fullName>
    </alternativeName>
</protein>
<proteinExistence type="inferred from homology"/>
<accession>Q318Q5</accession>
<sequence>MANNKSAKKRIKIAERNRLINKSYKSTVRTLTKKTLENCEKYKKDPNDENKDLVKTSLNKAFSLIDKAVKKNVLHKNNGANRKSKINNLVKTTLATQ</sequence>
<name>RS20_PROM9</name>
<comment type="function">
    <text evidence="1">Binds directly to 16S ribosomal RNA.</text>
</comment>
<comment type="similarity">
    <text evidence="1">Belongs to the bacterial ribosomal protein bS20 family.</text>
</comment>
<evidence type="ECO:0000255" key="1">
    <source>
        <dbReference type="HAMAP-Rule" id="MF_00500"/>
    </source>
</evidence>
<evidence type="ECO:0000305" key="2"/>
<organism>
    <name type="scientific">Prochlorococcus marinus (strain MIT 9312)</name>
    <dbReference type="NCBI Taxonomy" id="74546"/>
    <lineage>
        <taxon>Bacteria</taxon>
        <taxon>Bacillati</taxon>
        <taxon>Cyanobacteriota</taxon>
        <taxon>Cyanophyceae</taxon>
        <taxon>Synechococcales</taxon>
        <taxon>Prochlorococcaceae</taxon>
        <taxon>Prochlorococcus</taxon>
    </lineage>
</organism>
<gene>
    <name evidence="1" type="primary">rpsT</name>
    <name evidence="1" type="synonym">rps20</name>
    <name type="ordered locus">PMT9312_1580</name>
</gene>
<feature type="chain" id="PRO_0000236447" description="Small ribosomal subunit protein bS20">
    <location>
        <begin position="1"/>
        <end position="97"/>
    </location>
</feature>
<dbReference type="EMBL" id="CP000111">
    <property type="protein sequence ID" value="ABB50640.1"/>
    <property type="molecule type" value="Genomic_DNA"/>
</dbReference>
<dbReference type="RefSeq" id="WP_011377122.1">
    <property type="nucleotide sequence ID" value="NC_007577.1"/>
</dbReference>
<dbReference type="SMR" id="Q318Q5"/>
<dbReference type="STRING" id="74546.PMT9312_1580"/>
<dbReference type="KEGG" id="pmi:PMT9312_1580"/>
<dbReference type="eggNOG" id="COG0268">
    <property type="taxonomic scope" value="Bacteria"/>
</dbReference>
<dbReference type="HOGENOM" id="CLU_160655_5_0_3"/>
<dbReference type="OrthoDB" id="9808392at2"/>
<dbReference type="Proteomes" id="UP000002715">
    <property type="component" value="Chromosome"/>
</dbReference>
<dbReference type="GO" id="GO:0015935">
    <property type="term" value="C:small ribosomal subunit"/>
    <property type="evidence" value="ECO:0007669"/>
    <property type="project" value="TreeGrafter"/>
</dbReference>
<dbReference type="GO" id="GO:0070181">
    <property type="term" value="F:small ribosomal subunit rRNA binding"/>
    <property type="evidence" value="ECO:0007669"/>
    <property type="project" value="TreeGrafter"/>
</dbReference>
<dbReference type="GO" id="GO:0003735">
    <property type="term" value="F:structural constituent of ribosome"/>
    <property type="evidence" value="ECO:0007669"/>
    <property type="project" value="InterPro"/>
</dbReference>
<dbReference type="GO" id="GO:0006412">
    <property type="term" value="P:translation"/>
    <property type="evidence" value="ECO:0007669"/>
    <property type="project" value="UniProtKB-UniRule"/>
</dbReference>
<dbReference type="Gene3D" id="1.20.58.110">
    <property type="entry name" value="Ribosomal protein S20"/>
    <property type="match status" value="1"/>
</dbReference>
<dbReference type="HAMAP" id="MF_00500">
    <property type="entry name" value="Ribosomal_bS20"/>
    <property type="match status" value="1"/>
</dbReference>
<dbReference type="InterPro" id="IPR002583">
    <property type="entry name" value="Ribosomal_bS20"/>
</dbReference>
<dbReference type="InterPro" id="IPR036510">
    <property type="entry name" value="Ribosomal_bS20_sf"/>
</dbReference>
<dbReference type="NCBIfam" id="TIGR00029">
    <property type="entry name" value="S20"/>
    <property type="match status" value="1"/>
</dbReference>
<dbReference type="PANTHER" id="PTHR33398">
    <property type="entry name" value="30S RIBOSOMAL PROTEIN S20"/>
    <property type="match status" value="1"/>
</dbReference>
<dbReference type="PANTHER" id="PTHR33398:SF1">
    <property type="entry name" value="SMALL RIBOSOMAL SUBUNIT PROTEIN BS20C"/>
    <property type="match status" value="1"/>
</dbReference>
<dbReference type="Pfam" id="PF01649">
    <property type="entry name" value="Ribosomal_S20p"/>
    <property type="match status" value="1"/>
</dbReference>
<dbReference type="SUPFAM" id="SSF46992">
    <property type="entry name" value="Ribosomal protein S20"/>
    <property type="match status" value="1"/>
</dbReference>